<accession>P24958</accession>
<accession>O47887</accession>
<accession>O48349</accession>
<accession>Q9G5G0</accession>
<accession>Q9XNF4</accession>
<protein>
    <recommendedName>
        <fullName>Cytochrome b</fullName>
    </recommendedName>
    <alternativeName>
        <fullName>Complex III subunit 3</fullName>
    </alternativeName>
    <alternativeName>
        <fullName>Complex III subunit III</fullName>
    </alternativeName>
    <alternativeName>
        <fullName>Cytochrome b-c1 complex subunit 3</fullName>
    </alternativeName>
    <alternativeName>
        <fullName>Ubiquinol-cytochrome-c reductase complex cytochrome b subunit</fullName>
    </alternativeName>
</protein>
<reference key="1">
    <citation type="journal article" date="1991" name="J. Mol. Evol.">
        <title>Evolution of the cytochrome b gene of mammals.</title>
        <authorList>
            <person name="Irwin D.M."/>
            <person name="Kocher T.D."/>
            <person name="Wilson A.C."/>
        </authorList>
    </citation>
    <scope>NUCLEOTIDE SEQUENCE [GENOMIC DNA]</scope>
</reference>
<reference key="2">
    <citation type="journal article" date="1998" name="J. Mol. Evol.">
        <title>Molecular phylogenetic inference of the woolly mammoth Mammuthus primigenius, based on complete sequences of mitochondrial cytochrome b and 12S ribosomal RNA genes.</title>
        <authorList>
            <person name="Noro M."/>
            <person name="Masuda R."/>
            <person name="Dubrovo I.A."/>
            <person name="Yoshida M.C."/>
            <person name="Kato M."/>
        </authorList>
    </citation>
    <scope>NUCLEOTIDE SEQUENCE [GENOMIC DNA]</scope>
</reference>
<reference key="3">
    <citation type="journal article" date="2000" name="Zoology">
        <title>The complete mitochondrial genome sequence of the African elephant (Loxodonta africana), phylogenetic relationships of Proboscidea to other mammals and D-loop heteroplasmy.</title>
        <authorList>
            <person name="Hauf J."/>
            <person name="Waddell P.J."/>
            <person name="Chalwatzis N."/>
            <person name="Joger U."/>
            <person name="Zimmermann F.K."/>
        </authorList>
    </citation>
    <scope>NUCLEOTIDE SEQUENCE [GENOMIC DNA]</scope>
    <source>
        <tissue>Blood</tissue>
    </source>
</reference>
<reference key="4">
    <citation type="journal article" date="1999" name="C. R. Acad. Sci. III, Sci. Vie">
        <title>Molecular phylogeny of Elephantidae. Extreme divergence of the extant forest African elephant.</title>
        <authorList>
            <person name="Barriel V."/>
            <person name="Thuet E."/>
            <person name="Tassy P."/>
        </authorList>
    </citation>
    <scope>NUCLEOTIDE SEQUENCE [GENOMIC DNA] OF 2-376</scope>
</reference>
<reference key="5">
    <citation type="journal article" date="1996" name="Proc. Natl. Acad. Sci. U.S.A.">
        <title>Phylogenetic resolution within the Elephantidae using fossil DNA sequence from the American mastodon (Mammut americanum) as an outgroup.</title>
        <authorList>
            <person name="Yang H."/>
            <person name="Golenberg E.M."/>
            <person name="Shoshani J."/>
        </authorList>
    </citation>
    <scope>NUCLEOTIDE SEQUENCE [GENOMIC DNA] OF 32-106</scope>
</reference>
<reference key="6">
    <citation type="submission" date="1999-12" db="EMBL/GenBank/DDBJ databases">
        <authorList>
            <person name="Mueller S."/>
            <person name="Steinborn R."/>
            <person name="Mueller M."/>
        </authorList>
    </citation>
    <scope>NUCLEOTIDE SEQUENCE [GENOMIC DNA] OF 339-378</scope>
</reference>
<keyword id="KW-0249">Electron transport</keyword>
<keyword id="KW-0349">Heme</keyword>
<keyword id="KW-0408">Iron</keyword>
<keyword id="KW-0472">Membrane</keyword>
<keyword id="KW-0479">Metal-binding</keyword>
<keyword id="KW-0496">Mitochondrion</keyword>
<keyword id="KW-0999">Mitochondrion inner membrane</keyword>
<keyword id="KW-1185">Reference proteome</keyword>
<keyword id="KW-0679">Respiratory chain</keyword>
<keyword id="KW-0812">Transmembrane</keyword>
<keyword id="KW-1133">Transmembrane helix</keyword>
<keyword id="KW-0813">Transport</keyword>
<keyword id="KW-0830">Ubiquinone</keyword>
<organism>
    <name type="scientific">Loxodonta africana</name>
    <name type="common">African elephant</name>
    <dbReference type="NCBI Taxonomy" id="9785"/>
    <lineage>
        <taxon>Eukaryota</taxon>
        <taxon>Metazoa</taxon>
        <taxon>Chordata</taxon>
        <taxon>Craniata</taxon>
        <taxon>Vertebrata</taxon>
        <taxon>Euteleostomi</taxon>
        <taxon>Mammalia</taxon>
        <taxon>Eutheria</taxon>
        <taxon>Afrotheria</taxon>
        <taxon>Proboscidea</taxon>
        <taxon>Elephantidae</taxon>
        <taxon>Loxodonta</taxon>
    </lineage>
</organism>
<comment type="function">
    <text evidence="2">Component of the ubiquinol-cytochrome c reductase complex (complex III or cytochrome b-c1 complex) that is part of the mitochondrial respiratory chain. The b-c1 complex mediates electron transfer from ubiquinol to cytochrome c. Contributes to the generation of a proton gradient across the mitochondrial membrane that is then used for ATP synthesis.</text>
</comment>
<comment type="cofactor">
    <cofactor evidence="2">
        <name>heme b</name>
        <dbReference type="ChEBI" id="CHEBI:60344"/>
    </cofactor>
    <text evidence="2">Binds 2 heme b groups non-covalently.</text>
</comment>
<comment type="subunit">
    <text evidence="2">The cytochrome bc1 complex contains 11 subunits: 3 respiratory subunits (MT-CYB, CYC1 and UQCRFS1), 2 core proteins (UQCRC1 and UQCRC2) and 6 low-molecular weight proteins (UQCRH/QCR6, UQCRB/QCR7, UQCRQ/QCR8, UQCR10/QCR9, UQCR11/QCR10 and a cleavage product of UQCRFS1). This cytochrome bc1 complex then forms a dimer.</text>
</comment>
<comment type="subcellular location">
    <subcellularLocation>
        <location evidence="2">Mitochondrion inner membrane</location>
        <topology evidence="2">Multi-pass membrane protein</topology>
    </subcellularLocation>
</comment>
<comment type="miscellaneous">
    <text evidence="1">Heme 1 (or BL or b562) is low-potential and absorbs at about 562 nm, and heme 2 (or BH or b566) is high-potential and absorbs at about 566 nm.</text>
</comment>
<comment type="similarity">
    <text evidence="3 4">Belongs to the cytochrome b family.</text>
</comment>
<comment type="caution">
    <text evidence="2">The full-length protein contains only eight transmembrane helices, not nine as predicted by bioinformatics tools.</text>
</comment>
<proteinExistence type="inferred from homology"/>
<feature type="chain" id="PRO_0000061136" description="Cytochrome b">
    <location>
        <begin position="1"/>
        <end position="378"/>
    </location>
</feature>
<feature type="transmembrane region" description="Helical" evidence="2">
    <location>
        <begin position="33"/>
        <end position="53"/>
    </location>
</feature>
<feature type="transmembrane region" description="Helical" evidence="2">
    <location>
        <begin position="77"/>
        <end position="98"/>
    </location>
</feature>
<feature type="transmembrane region" description="Helical" evidence="2">
    <location>
        <begin position="113"/>
        <end position="133"/>
    </location>
</feature>
<feature type="transmembrane region" description="Helical" evidence="2">
    <location>
        <begin position="178"/>
        <end position="198"/>
    </location>
</feature>
<feature type="transmembrane region" description="Helical" evidence="2">
    <location>
        <begin position="226"/>
        <end position="246"/>
    </location>
</feature>
<feature type="transmembrane region" description="Helical" evidence="2">
    <location>
        <begin position="288"/>
        <end position="308"/>
    </location>
</feature>
<feature type="transmembrane region" description="Helical" evidence="2">
    <location>
        <begin position="320"/>
        <end position="340"/>
    </location>
</feature>
<feature type="transmembrane region" description="Helical" evidence="2">
    <location>
        <begin position="347"/>
        <end position="367"/>
    </location>
</feature>
<feature type="binding site" description="axial binding residue" evidence="2">
    <location>
        <position position="83"/>
    </location>
    <ligand>
        <name>heme b</name>
        <dbReference type="ChEBI" id="CHEBI:60344"/>
        <label>b562</label>
    </ligand>
    <ligandPart>
        <name>Fe</name>
        <dbReference type="ChEBI" id="CHEBI:18248"/>
    </ligandPart>
</feature>
<feature type="binding site" description="axial binding residue" evidence="2">
    <location>
        <position position="97"/>
    </location>
    <ligand>
        <name>heme b</name>
        <dbReference type="ChEBI" id="CHEBI:60344"/>
        <label>b566</label>
    </ligand>
    <ligandPart>
        <name>Fe</name>
        <dbReference type="ChEBI" id="CHEBI:18248"/>
    </ligandPart>
</feature>
<feature type="binding site" description="axial binding residue" evidence="2">
    <location>
        <position position="182"/>
    </location>
    <ligand>
        <name>heme b</name>
        <dbReference type="ChEBI" id="CHEBI:60344"/>
        <label>b562</label>
    </ligand>
    <ligandPart>
        <name>Fe</name>
        <dbReference type="ChEBI" id="CHEBI:18248"/>
    </ligandPart>
</feature>
<feature type="binding site" description="axial binding residue" evidence="2">
    <location>
        <position position="196"/>
    </location>
    <ligand>
        <name>heme b</name>
        <dbReference type="ChEBI" id="CHEBI:60344"/>
        <label>b566</label>
    </ligand>
    <ligandPart>
        <name>Fe</name>
        <dbReference type="ChEBI" id="CHEBI:18248"/>
    </ligandPart>
</feature>
<feature type="binding site" evidence="2">
    <location>
        <position position="201"/>
    </location>
    <ligand>
        <name>a ubiquinone</name>
        <dbReference type="ChEBI" id="CHEBI:16389"/>
    </ligand>
</feature>
<feature type="sequence conflict" description="In Ref. 1; CAA39732." evidence="5" ref="1">
    <original>H</original>
    <variation>D</variation>
    <location>
        <position position="3"/>
    </location>
</feature>
<feature type="sequence conflict" description="In Ref. 1; CAA39732." evidence="5" ref="1">
    <original>I</original>
    <variation>M</variation>
    <location>
        <position position="27"/>
    </location>
</feature>
<feature type="sequence conflict" description="In Ref. 1; CAA39732." evidence="5" ref="1">
    <original>F</original>
    <variation>L</variation>
    <location>
        <position position="150"/>
    </location>
</feature>
<feature type="sequence conflict" description="In Ref. 2; BAA25012/BAA25013." evidence="5" ref="2">
    <original>Y</original>
    <variation>C</variation>
    <location>
        <position position="155"/>
    </location>
</feature>
<feature type="sequence conflict" description="In Ref. 2; BAA25012/BAA25013." evidence="5" ref="2">
    <original>T</original>
    <variation>I</variation>
    <location>
        <position position="212"/>
    </location>
</feature>
<feature type="sequence conflict" description="In Ref. 1; CAA39732." evidence="5" ref="1">
    <original>M</original>
    <variation>H</variation>
    <location>
        <position position="249"/>
    </location>
</feature>
<feature type="sequence conflict" description="In Ref. 1; CAA39732." evidence="5" ref="1">
    <original>MPAD</original>
    <variation>TLAN</variation>
    <location>
        <begin position="257"/>
        <end position="260"/>
    </location>
</feature>
<feature type="sequence conflict" description="In Ref. 1; CAA39732." evidence="5" ref="1">
    <original>TPL</original>
    <variation>NPP</variation>
    <location>
        <begin position="264"/>
        <end position="266"/>
    </location>
</feature>
<feature type="sequence conflict" description="In Ref. 1; CAA39732." evidence="5" ref="1">
    <original>QVLF</original>
    <variation>LCAYC</variation>
    <location>
        <begin position="322"/>
        <end position="325"/>
    </location>
</feature>
<geneLocation type="mitochondrion"/>
<gene>
    <name type="primary">MT-CYB</name>
    <name type="synonym">COB</name>
    <name type="synonym">CYTB</name>
    <name type="synonym">MTCYB</name>
</gene>
<evidence type="ECO:0000250" key="1"/>
<evidence type="ECO:0000250" key="2">
    <source>
        <dbReference type="UniProtKB" id="P00157"/>
    </source>
</evidence>
<evidence type="ECO:0000255" key="3">
    <source>
        <dbReference type="PROSITE-ProRule" id="PRU00967"/>
    </source>
</evidence>
<evidence type="ECO:0000255" key="4">
    <source>
        <dbReference type="PROSITE-ProRule" id="PRU00968"/>
    </source>
</evidence>
<evidence type="ECO:0000305" key="5"/>
<name>CYB_LOXAF</name>
<dbReference type="EMBL" id="X56285">
    <property type="protein sequence ID" value="CAA39732.1"/>
    <property type="molecule type" value="Genomic_DNA"/>
</dbReference>
<dbReference type="EMBL" id="D84150">
    <property type="protein sequence ID" value="BAA25011.1"/>
    <property type="molecule type" value="Genomic_DNA"/>
</dbReference>
<dbReference type="EMBL" id="D84151">
    <property type="protein sequence ID" value="BAA25012.1"/>
    <property type="molecule type" value="Genomic_DNA"/>
</dbReference>
<dbReference type="EMBL" id="D84152">
    <property type="protein sequence ID" value="BAA25013.1"/>
    <property type="molecule type" value="Genomic_DNA"/>
</dbReference>
<dbReference type="EMBL" id="AJ224821">
    <property type="protein sequence ID" value="CAA12150.1"/>
    <property type="molecule type" value="Genomic_DNA"/>
</dbReference>
<dbReference type="EMBL" id="AF132528">
    <property type="protein sequence ID" value="AAD44171.1"/>
    <property type="molecule type" value="Genomic_DNA"/>
</dbReference>
<dbReference type="EMBL" id="U23741">
    <property type="protein sequence ID" value="AAA73784.1"/>
    <property type="molecule type" value="Genomic_DNA"/>
</dbReference>
<dbReference type="EMBL" id="AF219242">
    <property type="protein sequence ID" value="AAG44238.1"/>
    <property type="molecule type" value="Genomic_DNA"/>
</dbReference>
<dbReference type="PIR" id="T45562">
    <property type="entry name" value="S17412"/>
</dbReference>
<dbReference type="RefSeq" id="NP_009291.1">
    <property type="nucleotide sequence ID" value="NC_000934.1"/>
</dbReference>
<dbReference type="SMR" id="P24958"/>
<dbReference type="FunCoup" id="P24958">
    <property type="interactions" value="61"/>
</dbReference>
<dbReference type="STRING" id="9785.ENSLAFP00000029503"/>
<dbReference type="Ensembl" id="ENSLAFT00000038069.1">
    <property type="protein sequence ID" value="ENSLAFP00000029503.1"/>
    <property type="gene ID" value="ENSLAFG00000033303.1"/>
</dbReference>
<dbReference type="GeneID" id="808783"/>
<dbReference type="KEGG" id="lav:808783"/>
<dbReference type="CTD" id="4519"/>
<dbReference type="eggNOG" id="KOG4663">
    <property type="taxonomic scope" value="Eukaryota"/>
</dbReference>
<dbReference type="GeneTree" id="ENSGT00390000017948"/>
<dbReference type="HOGENOM" id="CLU_031114_3_0_1"/>
<dbReference type="InParanoid" id="P24958"/>
<dbReference type="OMA" id="NISAWWN"/>
<dbReference type="OrthoDB" id="244at2759"/>
<dbReference type="TreeFam" id="TF353088"/>
<dbReference type="Proteomes" id="UP000007646">
    <property type="component" value="Unassembled WGS sequence"/>
</dbReference>
<dbReference type="GO" id="GO:0005743">
    <property type="term" value="C:mitochondrial inner membrane"/>
    <property type="evidence" value="ECO:0007669"/>
    <property type="project" value="UniProtKB-SubCell"/>
</dbReference>
<dbReference type="GO" id="GO:0045275">
    <property type="term" value="C:respiratory chain complex III"/>
    <property type="evidence" value="ECO:0007669"/>
    <property type="project" value="Ensembl"/>
</dbReference>
<dbReference type="GO" id="GO:0046872">
    <property type="term" value="F:metal ion binding"/>
    <property type="evidence" value="ECO:0007669"/>
    <property type="project" value="UniProtKB-KW"/>
</dbReference>
<dbReference type="GO" id="GO:0008121">
    <property type="term" value="F:ubiquinol-cytochrome-c reductase activity"/>
    <property type="evidence" value="ECO:0007669"/>
    <property type="project" value="InterPro"/>
</dbReference>
<dbReference type="GO" id="GO:0006122">
    <property type="term" value="P:mitochondrial electron transport, ubiquinol to cytochrome c"/>
    <property type="evidence" value="ECO:0007669"/>
    <property type="project" value="TreeGrafter"/>
</dbReference>
<dbReference type="CDD" id="cd00290">
    <property type="entry name" value="cytochrome_b_C"/>
    <property type="match status" value="1"/>
</dbReference>
<dbReference type="CDD" id="cd00284">
    <property type="entry name" value="Cytochrome_b_N"/>
    <property type="match status" value="1"/>
</dbReference>
<dbReference type="FunFam" id="1.20.810.10:FF:000002">
    <property type="entry name" value="Cytochrome b"/>
    <property type="match status" value="1"/>
</dbReference>
<dbReference type="Gene3D" id="1.20.810.10">
    <property type="entry name" value="Cytochrome Bc1 Complex, Chain C"/>
    <property type="match status" value="1"/>
</dbReference>
<dbReference type="InterPro" id="IPR005798">
    <property type="entry name" value="Cyt_b/b6_C"/>
</dbReference>
<dbReference type="InterPro" id="IPR036150">
    <property type="entry name" value="Cyt_b/b6_C_sf"/>
</dbReference>
<dbReference type="InterPro" id="IPR005797">
    <property type="entry name" value="Cyt_b/b6_N"/>
</dbReference>
<dbReference type="InterPro" id="IPR027387">
    <property type="entry name" value="Cytb/b6-like_sf"/>
</dbReference>
<dbReference type="InterPro" id="IPR030689">
    <property type="entry name" value="Cytochrome_b"/>
</dbReference>
<dbReference type="InterPro" id="IPR048260">
    <property type="entry name" value="Cytochrome_b_C_euk/bac"/>
</dbReference>
<dbReference type="InterPro" id="IPR048259">
    <property type="entry name" value="Cytochrome_b_N_euk/bac"/>
</dbReference>
<dbReference type="InterPro" id="IPR016174">
    <property type="entry name" value="Di-haem_cyt_TM"/>
</dbReference>
<dbReference type="PANTHER" id="PTHR19271">
    <property type="entry name" value="CYTOCHROME B"/>
    <property type="match status" value="1"/>
</dbReference>
<dbReference type="PANTHER" id="PTHR19271:SF16">
    <property type="entry name" value="CYTOCHROME B"/>
    <property type="match status" value="1"/>
</dbReference>
<dbReference type="Pfam" id="PF00032">
    <property type="entry name" value="Cytochrom_B_C"/>
    <property type="match status" value="1"/>
</dbReference>
<dbReference type="Pfam" id="PF00033">
    <property type="entry name" value="Cytochrome_B"/>
    <property type="match status" value="1"/>
</dbReference>
<dbReference type="PIRSF" id="PIRSF038885">
    <property type="entry name" value="COB"/>
    <property type="match status" value="1"/>
</dbReference>
<dbReference type="SUPFAM" id="SSF81648">
    <property type="entry name" value="a domain/subunit of cytochrome bc1 complex (Ubiquinol-cytochrome c reductase)"/>
    <property type="match status" value="1"/>
</dbReference>
<dbReference type="SUPFAM" id="SSF81342">
    <property type="entry name" value="Transmembrane di-heme cytochromes"/>
    <property type="match status" value="1"/>
</dbReference>
<dbReference type="PROSITE" id="PS51003">
    <property type="entry name" value="CYTB_CTER"/>
    <property type="match status" value="1"/>
</dbReference>
<dbReference type="PROSITE" id="PS51002">
    <property type="entry name" value="CYTB_NTER"/>
    <property type="match status" value="1"/>
</dbReference>
<sequence length="378" mass="42740">MTHIRKSHPLLKIINKSFIDLPTPSNISTWWNFGSLLGACLITQILTGLFLAMHYTPDTMTAFSSMSHICRDVNYGWIIRQLHSNGASIFFLCLYTHIGRNIYYGSYLYSETWNTGIMLLLITMATAFMGYVLPWGQMSFWGATVITNLFSAIPYIGTNLVEWIWGGFSVDKATLNRFFALHFILPFTMIALAGVHLTFLHETGSNNPLGLTSDSDKIPFHPYYTIKDFLGLLILILLLLLLALLSPDMLGDPDNYMPADPLNTPLHIKPEWYFLFAYAILRSVPNKLGGVLALLLSILILGLMPLLHTSKHRSMMLRPLSQVLFWTLTMDLLTLTWIGSQPVEYPYIIIGQMASILYFSIILAFLPIAGVIENYLIK</sequence>